<comment type="function">
    <text evidence="2">Mediates the side-chain deamidation of N-terminal glutamine residues to glutamate, an important step in N-end rule pathway of protein degradation. Conversion of the resulting N-terminal glutamine to glutamate renders the protein susceptible to arginylation, polyubiquitination and degradation as specified by the N-end rule. Does not act on substrates with internal or C-terminal glutamine and does not act on non-glutamine residues in any position.</text>
</comment>
<comment type="catalytic activity">
    <reaction evidence="2">
        <text>N-terminal L-glutaminyl-[protein] + H2O = N-terminal L-glutamyl-[protein] + NH4(+)</text>
        <dbReference type="Rhea" id="RHEA:50680"/>
        <dbReference type="Rhea" id="RHEA-COMP:12668"/>
        <dbReference type="Rhea" id="RHEA-COMP:12777"/>
        <dbReference type="ChEBI" id="CHEBI:15377"/>
        <dbReference type="ChEBI" id="CHEBI:28938"/>
        <dbReference type="ChEBI" id="CHEBI:64721"/>
        <dbReference type="ChEBI" id="CHEBI:64722"/>
        <dbReference type="EC" id="3.5.1.122"/>
    </reaction>
</comment>
<comment type="subunit">
    <text evidence="3">Monomer.</text>
</comment>
<comment type="similarity">
    <text evidence="4">Belongs to the NTAQ1 family.</text>
</comment>
<comment type="sequence caution" evidence="4">
    <conflict type="erroneous gene model prediction">
        <sequence resource="EMBL-CDS" id="CAP38644"/>
    </conflict>
</comment>
<keyword id="KW-0378">Hydrolase</keyword>
<keyword id="KW-1185">Reference proteome</keyword>
<organism>
    <name type="scientific">Caenorhabditis briggsae</name>
    <dbReference type="NCBI Taxonomy" id="6238"/>
    <lineage>
        <taxon>Eukaryota</taxon>
        <taxon>Metazoa</taxon>
        <taxon>Ecdysozoa</taxon>
        <taxon>Nematoda</taxon>
        <taxon>Chromadorea</taxon>
        <taxon>Rhabditida</taxon>
        <taxon>Rhabditina</taxon>
        <taxon>Rhabditomorpha</taxon>
        <taxon>Rhabditoidea</taxon>
        <taxon>Rhabditidae</taxon>
        <taxon>Peloderinae</taxon>
        <taxon>Caenorhabditis</taxon>
    </lineage>
</organism>
<sequence length="185" mass="22107">MLSAEEAPYQSCYCEENVYKLLEKLKPNLDDFFAVLISNDIKMIPLWKQKAERDPDVLWDYHVITISKNSDGSAKVYDFDSWIDWGVDFQTYWNQTMNEDEMKQFREKYRRKFRIIPARIYLSLLSSDRSHMLNPDGTYMKPPPEWPLIQNSTNSNLMNLIDMKLEFPETMVMDETEIRRFFSDA</sequence>
<evidence type="ECO:0000250" key="1"/>
<evidence type="ECO:0000250" key="2">
    <source>
        <dbReference type="UniProtKB" id="Q80WB5"/>
    </source>
</evidence>
<evidence type="ECO:0000250" key="3">
    <source>
        <dbReference type="UniProtKB" id="Q96HA8"/>
    </source>
</evidence>
<evidence type="ECO:0000305" key="4"/>
<name>NTAQ1_CAEBR</name>
<protein>
    <recommendedName>
        <fullName>Protein N-terminal glutamine amidohydrolase</fullName>
        <ecNumber evidence="2">3.5.1.122</ecNumber>
    </recommendedName>
    <alternativeName>
        <fullName>Protein NH2-terminal glutamine deamidase</fullName>
        <shortName>N-terminal Gln amidase</shortName>
        <shortName>Nt(Q)-amidase</shortName>
    </alternativeName>
</protein>
<dbReference type="EC" id="3.5.1.122" evidence="2"/>
<dbReference type="EMBL" id="HE600952">
    <property type="protein sequence ID" value="CAP38644.1"/>
    <property type="status" value="ALT_SEQ"/>
    <property type="molecule type" value="Genomic_DNA"/>
</dbReference>
<dbReference type="RefSeq" id="XP_002629881.1">
    <property type="nucleotide sequence ID" value="XM_002629835.1"/>
</dbReference>
<dbReference type="SMR" id="A8Y183"/>
<dbReference type="FunCoup" id="A8Y183">
    <property type="interactions" value="2104"/>
</dbReference>
<dbReference type="STRING" id="6238.A8Y183"/>
<dbReference type="GeneID" id="8573057"/>
<dbReference type="KEGG" id="cbr:CBG_21918"/>
<dbReference type="CTD" id="8573057"/>
<dbReference type="WormBase" id="CBG21918">
    <property type="protein sequence ID" value="CBP39913"/>
    <property type="gene ID" value="WBGene00040587"/>
</dbReference>
<dbReference type="eggNOG" id="KOG3261">
    <property type="taxonomic scope" value="Eukaryota"/>
</dbReference>
<dbReference type="HOGENOM" id="CLU_091083_2_0_1"/>
<dbReference type="InParanoid" id="A8Y183"/>
<dbReference type="Proteomes" id="UP000008549">
    <property type="component" value="Unassembled WGS sequence"/>
</dbReference>
<dbReference type="GO" id="GO:0005829">
    <property type="term" value="C:cytosol"/>
    <property type="evidence" value="ECO:0000318"/>
    <property type="project" value="GO_Central"/>
</dbReference>
<dbReference type="GO" id="GO:0005634">
    <property type="term" value="C:nucleus"/>
    <property type="evidence" value="ECO:0000318"/>
    <property type="project" value="GO_Central"/>
</dbReference>
<dbReference type="GO" id="GO:0008418">
    <property type="term" value="F:protein-N-terminal asparagine amidohydrolase activity"/>
    <property type="evidence" value="ECO:0007669"/>
    <property type="project" value="InterPro"/>
</dbReference>
<dbReference type="GO" id="GO:0070773">
    <property type="term" value="F:protein-N-terminal glutamine amidohydrolase activity"/>
    <property type="evidence" value="ECO:0000318"/>
    <property type="project" value="GO_Central"/>
</dbReference>
<dbReference type="FunFam" id="3.10.620.10:FF:000002">
    <property type="entry name" value="Protein N-terminal glutamine amidohydrolase"/>
    <property type="match status" value="1"/>
</dbReference>
<dbReference type="Gene3D" id="3.10.620.10">
    <property type="entry name" value="Protein N-terminal glutamine amidohydrolase, alpha beta roll"/>
    <property type="match status" value="1"/>
</dbReference>
<dbReference type="InterPro" id="IPR037132">
    <property type="entry name" value="N_Gln_amidohydro_ab_roll_sf"/>
</dbReference>
<dbReference type="InterPro" id="IPR039733">
    <property type="entry name" value="NTAQ1"/>
</dbReference>
<dbReference type="InterPro" id="IPR023128">
    <property type="entry name" value="Prot_N_Gln_amidohydro_ab_roll"/>
</dbReference>
<dbReference type="PANTHER" id="PTHR13035">
    <property type="entry name" value="PROTEIN N-TERMINAL GLUTAMINE AMIDOHYDROLASE"/>
    <property type="match status" value="1"/>
</dbReference>
<dbReference type="PANTHER" id="PTHR13035:SF0">
    <property type="entry name" value="PROTEIN N-TERMINAL GLUTAMINE AMIDOHYDROLASE"/>
    <property type="match status" value="1"/>
</dbReference>
<dbReference type="Pfam" id="PF09764">
    <property type="entry name" value="Nt_Gln_amidase"/>
    <property type="match status" value="1"/>
</dbReference>
<reference key="1">
    <citation type="journal article" date="2003" name="PLoS Biol.">
        <title>The genome sequence of Caenorhabditis briggsae: a platform for comparative genomics.</title>
        <authorList>
            <person name="Stein L.D."/>
            <person name="Bao Z."/>
            <person name="Blasiar D."/>
            <person name="Blumenthal T."/>
            <person name="Brent M.R."/>
            <person name="Chen N."/>
            <person name="Chinwalla A."/>
            <person name="Clarke L."/>
            <person name="Clee C."/>
            <person name="Coghlan A."/>
            <person name="Coulson A."/>
            <person name="D'Eustachio P."/>
            <person name="Fitch D.H.A."/>
            <person name="Fulton L.A."/>
            <person name="Fulton R.E."/>
            <person name="Griffiths-Jones S."/>
            <person name="Harris T.W."/>
            <person name="Hillier L.W."/>
            <person name="Kamath R."/>
            <person name="Kuwabara P.E."/>
            <person name="Mardis E.R."/>
            <person name="Marra M.A."/>
            <person name="Miner T.L."/>
            <person name="Minx P."/>
            <person name="Mullikin J.C."/>
            <person name="Plumb R.W."/>
            <person name="Rogers J."/>
            <person name="Schein J.E."/>
            <person name="Sohrmann M."/>
            <person name="Spieth J."/>
            <person name="Stajich J.E."/>
            <person name="Wei C."/>
            <person name="Willey D."/>
            <person name="Wilson R.K."/>
            <person name="Durbin R.M."/>
            <person name="Waterston R.H."/>
        </authorList>
    </citation>
    <scope>NUCLEOTIDE SEQUENCE [LARGE SCALE GENOMIC DNA]</scope>
    <source>
        <strain>AF16</strain>
    </source>
</reference>
<gene>
    <name type="ORF">CBG21918</name>
</gene>
<accession>A8Y183</accession>
<proteinExistence type="inferred from homology"/>
<feature type="chain" id="PRO_0000381820" description="Protein N-terminal glutamine amidohydrolase">
    <location>
        <begin position="1"/>
        <end position="185"/>
    </location>
</feature>
<feature type="active site" evidence="1">
    <location>
        <position position="14"/>
    </location>
</feature>
<feature type="active site" evidence="1">
    <location>
        <position position="62"/>
    </location>
</feature>
<feature type="active site" evidence="1">
    <location>
        <position position="78"/>
    </location>
</feature>